<name>DPO3_STAAM</name>
<organism>
    <name type="scientific">Staphylococcus aureus (strain Mu50 / ATCC 700699)</name>
    <dbReference type="NCBI Taxonomy" id="158878"/>
    <lineage>
        <taxon>Bacteria</taxon>
        <taxon>Bacillati</taxon>
        <taxon>Bacillota</taxon>
        <taxon>Bacilli</taxon>
        <taxon>Bacillales</taxon>
        <taxon>Staphylococcaceae</taxon>
        <taxon>Staphylococcus</taxon>
    </lineage>
</organism>
<sequence>MAMTEQQKFKVLADQIKISNQLDAEILNSGELTRIDVSNKNRTWEFHITLPQFLAHEDYLLFINAIEQEFKDIANVTCRFTVTNGTNQDEHAIKYFGHCIDQTALSPKVKGQLKQKKLIMSGKVLKVMVSNDIERNHFDKACNGSLIKAFRNCGFDIDKIIFETNDNDQEQNLASLEAHIQEEDEQSARLATEKLEKMKAEKAKQQDNNESAVDKCQIGKPIQIENIKPIESIIEEEFKVAIEGVIFDINLKELKSGRHIVEIKVTDYTDSLVLKMFTRKNKDDLEHFKALSVGKWVRAQGRIEEDTFIRDLVMMMSDIEEIKKATKKDKAEEKRVEFHLHTAMSQMDGIPNIGAYVKQAADWGHPAIAVTDHNVVQAFPDAHAAAEKHGIKMIYGMEGMLVDDGVPIAYKPQDVVLKDATYVVFDVETTGLSNQYDKIIELAAVKVHNGEIIDKFERFSNPHERLSETIINLTHITDDMLVDAPEIEEVLTEFKEWVGDAIFVAHNASFDMGFIDTGYERLGFGPSTNGVIDTLELSRTINTEYGKHGLNFLAKKYGVELTQHHRAIYDTEATAYIFIKMVQQMKELGVLNHNEINKKLSNEDAYKRARPSHVTLIVQNQQGLKNLFKIVSASLVKYFYRTPRIPRSLLDEYREGLLVGTACDEGELFTAVMQKDQSQVEKIAKYYDFIEIQPPALYQDLIDRELIRDTETLHEIYQRLIHAGDTAGIPVIATGNAHYLFEHDGIARKILIASQPGNPLNRSTLPEAHFRTTDEMLNEFHFLGEEKAHEIVVKNTNELADRIERVVPIKDELYTPRMEGANEEIRELSYTNARKLYGEDLPQIVIDRLEKELKSIIGNGFAVIYLISQRLVKKSLDDGYLVGSRGSVGSSFVATMTEITEVNPLPPHYICPNCKTSEFFNDGSVGSGFDLPDKTCETCGAPLIKEGQDIPFETFLGFKGDKVPDIDLNFSGEYQPNAHNYTKVLFGEDKVFRAGTIGTVAEKTAFGYVKGYLNDQGIHKRGAEIDRLVKGCTGVKRTTGQHPGGIIVVPDYMDIYDFTPIQYPADDQNSAWMTTHFDFHSIHDNVLKLDILGHDDPTMIRMLQDLSGIDPKTIPVDDKEVMQIFSTPESLGVTEDEILCKTGTFGVPEFGTGFVRQMLEDTKPTTFSELVQISGLSHGTDVWLGNAQELIKTGICDLSSVIGCRDDIMVYLMYAGLEPSMAFKIMESVRKGKGLTEEMIETMKENEVPDWYLDSCLKIKYMFPKAHAAAYVLMAVRIAYFKVHHPLYYYASYFTIRASDFDLITMIKDKTSIRNTVKDMYSRYMDLGKKEKDVLTVLEIMNEMAHRGYRMQPISLEKSQAFEFIIEGDTLIPPFISVPGLGENVAKRIVEARDDGPFLSKEDLNKKAGLSQKIIEYLDELGSLPNLPDKAQLSIFDM</sequence>
<accession>P63981</accession>
<accession>Q99UK8</accession>
<dbReference type="EC" id="2.7.7.7" evidence="1"/>
<dbReference type="EMBL" id="BA000017">
    <property type="protein sequence ID" value="BAB57426.1"/>
    <property type="molecule type" value="Genomic_DNA"/>
</dbReference>
<dbReference type="SMR" id="P63981"/>
<dbReference type="KEGG" id="sav:SAV1264"/>
<dbReference type="HOGENOM" id="CLU_003297_2_0_9"/>
<dbReference type="PhylomeDB" id="P63981"/>
<dbReference type="Proteomes" id="UP000002481">
    <property type="component" value="Chromosome"/>
</dbReference>
<dbReference type="GO" id="GO:0005737">
    <property type="term" value="C:cytoplasm"/>
    <property type="evidence" value="ECO:0007669"/>
    <property type="project" value="UniProtKB-SubCell"/>
</dbReference>
<dbReference type="GO" id="GO:0008408">
    <property type="term" value="F:3'-5' exonuclease activity"/>
    <property type="evidence" value="ECO:0007669"/>
    <property type="project" value="UniProtKB-UniRule"/>
</dbReference>
<dbReference type="GO" id="GO:0003677">
    <property type="term" value="F:DNA binding"/>
    <property type="evidence" value="ECO:0007669"/>
    <property type="project" value="UniProtKB-UniRule"/>
</dbReference>
<dbReference type="GO" id="GO:0003887">
    <property type="term" value="F:DNA-directed DNA polymerase activity"/>
    <property type="evidence" value="ECO:0007669"/>
    <property type="project" value="UniProtKB-UniRule"/>
</dbReference>
<dbReference type="GO" id="GO:0006261">
    <property type="term" value="P:DNA-templated DNA replication"/>
    <property type="evidence" value="ECO:0007669"/>
    <property type="project" value="UniProtKB-UniRule"/>
</dbReference>
<dbReference type="CDD" id="cd06127">
    <property type="entry name" value="DEDDh"/>
    <property type="match status" value="1"/>
</dbReference>
<dbReference type="CDD" id="cd07435">
    <property type="entry name" value="PHP_PolIIIA_POLC"/>
    <property type="match status" value="1"/>
</dbReference>
<dbReference type="CDD" id="cd04484">
    <property type="entry name" value="polC_OBF"/>
    <property type="match status" value="1"/>
</dbReference>
<dbReference type="FunFam" id="3.30.420.10:FF:000045">
    <property type="entry name" value="3'-5' exonuclease DinG"/>
    <property type="match status" value="1"/>
</dbReference>
<dbReference type="Gene3D" id="1.10.150.870">
    <property type="match status" value="1"/>
</dbReference>
<dbReference type="Gene3D" id="3.30.1900.20">
    <property type="match status" value="2"/>
</dbReference>
<dbReference type="Gene3D" id="6.10.140.1510">
    <property type="match status" value="1"/>
</dbReference>
<dbReference type="Gene3D" id="3.20.20.140">
    <property type="entry name" value="Metal-dependent hydrolases"/>
    <property type="match status" value="1"/>
</dbReference>
<dbReference type="Gene3D" id="2.40.50.140">
    <property type="entry name" value="Nucleic acid-binding proteins"/>
    <property type="match status" value="1"/>
</dbReference>
<dbReference type="Gene3D" id="1.10.150.700">
    <property type="entry name" value="PolC, middle finger domain"/>
    <property type="match status" value="1"/>
</dbReference>
<dbReference type="Gene3D" id="3.30.420.10">
    <property type="entry name" value="Ribonuclease H-like superfamily/Ribonuclease H"/>
    <property type="match status" value="1"/>
</dbReference>
<dbReference type="HAMAP" id="MF_00356">
    <property type="entry name" value="DNApol_PolC"/>
    <property type="match status" value="1"/>
</dbReference>
<dbReference type="InterPro" id="IPR011708">
    <property type="entry name" value="DNA_pol3_alpha_NTPase_dom"/>
</dbReference>
<dbReference type="InterPro" id="IPR040982">
    <property type="entry name" value="DNA_pol3_finger"/>
</dbReference>
<dbReference type="InterPro" id="IPR024754">
    <property type="entry name" value="DNA_PolC-like_N_II"/>
</dbReference>
<dbReference type="InterPro" id="IPR028112">
    <property type="entry name" value="DNA_PolC-type_N_I"/>
</dbReference>
<dbReference type="InterPro" id="IPR004805">
    <property type="entry name" value="DnaE2/DnaE/PolC"/>
</dbReference>
<dbReference type="InterPro" id="IPR029460">
    <property type="entry name" value="DNAPol_HHH"/>
</dbReference>
<dbReference type="InterPro" id="IPR006054">
    <property type="entry name" value="DnaQ"/>
</dbReference>
<dbReference type="InterPro" id="IPR013520">
    <property type="entry name" value="Exonuclease_RNaseT/DNA_pol3"/>
</dbReference>
<dbReference type="InterPro" id="IPR012340">
    <property type="entry name" value="NA-bd_OB-fold"/>
</dbReference>
<dbReference type="InterPro" id="IPR004013">
    <property type="entry name" value="PHP_dom"/>
</dbReference>
<dbReference type="InterPro" id="IPR003141">
    <property type="entry name" value="Pol/His_phosphatase_N"/>
</dbReference>
<dbReference type="InterPro" id="IPR006308">
    <property type="entry name" value="Pol_III_a_PolC-type_gram_pos"/>
</dbReference>
<dbReference type="InterPro" id="IPR044923">
    <property type="entry name" value="PolC_middle_finger_sf"/>
</dbReference>
<dbReference type="InterPro" id="IPR012337">
    <property type="entry name" value="RNaseH-like_sf"/>
</dbReference>
<dbReference type="InterPro" id="IPR036397">
    <property type="entry name" value="RNaseH_sf"/>
</dbReference>
<dbReference type="NCBIfam" id="TIGR00573">
    <property type="entry name" value="dnaq"/>
    <property type="match status" value="1"/>
</dbReference>
<dbReference type="NCBIfam" id="TIGR01405">
    <property type="entry name" value="polC_Gram_pos"/>
    <property type="match status" value="1"/>
</dbReference>
<dbReference type="NCBIfam" id="NF001688">
    <property type="entry name" value="PRK00448.1"/>
    <property type="match status" value="1"/>
</dbReference>
<dbReference type="PANTHER" id="PTHR32294:SF5">
    <property type="entry name" value="DNA POLYMERASE III POLC-TYPE"/>
    <property type="match status" value="1"/>
</dbReference>
<dbReference type="PANTHER" id="PTHR32294">
    <property type="entry name" value="DNA POLYMERASE III SUBUNIT ALPHA"/>
    <property type="match status" value="1"/>
</dbReference>
<dbReference type="Pfam" id="PF14480">
    <property type="entry name" value="DNA_pol3_a_NI"/>
    <property type="match status" value="1"/>
</dbReference>
<dbReference type="Pfam" id="PF11490">
    <property type="entry name" value="DNA_pol3_a_NII"/>
    <property type="match status" value="1"/>
</dbReference>
<dbReference type="Pfam" id="PF07733">
    <property type="entry name" value="DNA_pol3_alpha"/>
    <property type="match status" value="2"/>
</dbReference>
<dbReference type="Pfam" id="PF17657">
    <property type="entry name" value="DNA_pol3_finger"/>
    <property type="match status" value="1"/>
</dbReference>
<dbReference type="Pfam" id="PF14579">
    <property type="entry name" value="HHH_6"/>
    <property type="match status" value="1"/>
</dbReference>
<dbReference type="Pfam" id="PF02811">
    <property type="entry name" value="PHP"/>
    <property type="match status" value="2"/>
</dbReference>
<dbReference type="Pfam" id="PF00929">
    <property type="entry name" value="RNase_T"/>
    <property type="match status" value="1"/>
</dbReference>
<dbReference type="SMART" id="SM00479">
    <property type="entry name" value="EXOIII"/>
    <property type="match status" value="1"/>
</dbReference>
<dbReference type="SMART" id="SM00481">
    <property type="entry name" value="POLIIIAc"/>
    <property type="match status" value="1"/>
</dbReference>
<dbReference type="SUPFAM" id="SSF81585">
    <property type="entry name" value="PsbU/PolX domain-like"/>
    <property type="match status" value="1"/>
</dbReference>
<dbReference type="SUPFAM" id="SSF53098">
    <property type="entry name" value="Ribonuclease H-like"/>
    <property type="match status" value="1"/>
</dbReference>
<comment type="function">
    <text evidence="1">Required for replicative DNA synthesis. This DNA polymerase also exhibits 3' to 5' exonuclease activity.</text>
</comment>
<comment type="catalytic activity">
    <reaction evidence="1">
        <text>DNA(n) + a 2'-deoxyribonucleoside 5'-triphosphate = DNA(n+1) + diphosphate</text>
        <dbReference type="Rhea" id="RHEA:22508"/>
        <dbReference type="Rhea" id="RHEA-COMP:17339"/>
        <dbReference type="Rhea" id="RHEA-COMP:17340"/>
        <dbReference type="ChEBI" id="CHEBI:33019"/>
        <dbReference type="ChEBI" id="CHEBI:61560"/>
        <dbReference type="ChEBI" id="CHEBI:173112"/>
        <dbReference type="EC" id="2.7.7.7"/>
    </reaction>
</comment>
<comment type="subcellular location">
    <subcellularLocation>
        <location evidence="1">Cytoplasm</location>
    </subcellularLocation>
</comment>
<comment type="similarity">
    <text evidence="1">Belongs to the DNA polymerase type-C family. PolC subfamily.</text>
</comment>
<protein>
    <recommendedName>
        <fullName evidence="1">DNA polymerase III PolC-type</fullName>
        <shortName evidence="1">PolIII</shortName>
        <ecNumber evidence="1">2.7.7.7</ecNumber>
    </recommendedName>
</protein>
<evidence type="ECO:0000255" key="1">
    <source>
        <dbReference type="HAMAP-Rule" id="MF_00356"/>
    </source>
</evidence>
<feature type="chain" id="PRO_0000204587" description="DNA polymerase III PolC-type">
    <location>
        <begin position="1"/>
        <end position="1438"/>
    </location>
</feature>
<feature type="domain" description="Exonuclease">
    <location>
        <begin position="422"/>
        <end position="578"/>
    </location>
</feature>
<proteinExistence type="inferred from homology"/>
<keyword id="KW-0963">Cytoplasm</keyword>
<keyword id="KW-0235">DNA replication</keyword>
<keyword id="KW-0239">DNA-directed DNA polymerase</keyword>
<keyword id="KW-0269">Exonuclease</keyword>
<keyword id="KW-0378">Hydrolase</keyword>
<keyword id="KW-0540">Nuclease</keyword>
<keyword id="KW-0548">Nucleotidyltransferase</keyword>
<keyword id="KW-0808">Transferase</keyword>
<reference key="1">
    <citation type="journal article" date="2001" name="Lancet">
        <title>Whole genome sequencing of meticillin-resistant Staphylococcus aureus.</title>
        <authorList>
            <person name="Kuroda M."/>
            <person name="Ohta T."/>
            <person name="Uchiyama I."/>
            <person name="Baba T."/>
            <person name="Yuzawa H."/>
            <person name="Kobayashi I."/>
            <person name="Cui L."/>
            <person name="Oguchi A."/>
            <person name="Aoki K."/>
            <person name="Nagai Y."/>
            <person name="Lian J.-Q."/>
            <person name="Ito T."/>
            <person name="Kanamori M."/>
            <person name="Matsumaru H."/>
            <person name="Maruyama A."/>
            <person name="Murakami H."/>
            <person name="Hosoyama A."/>
            <person name="Mizutani-Ui Y."/>
            <person name="Takahashi N.K."/>
            <person name="Sawano T."/>
            <person name="Inoue R."/>
            <person name="Kaito C."/>
            <person name="Sekimizu K."/>
            <person name="Hirakawa H."/>
            <person name="Kuhara S."/>
            <person name="Goto S."/>
            <person name="Yabuzaki J."/>
            <person name="Kanehisa M."/>
            <person name="Yamashita A."/>
            <person name="Oshima K."/>
            <person name="Furuya K."/>
            <person name="Yoshino C."/>
            <person name="Shiba T."/>
            <person name="Hattori M."/>
            <person name="Ogasawara N."/>
            <person name="Hayashi H."/>
            <person name="Hiramatsu K."/>
        </authorList>
    </citation>
    <scope>NUCLEOTIDE SEQUENCE [LARGE SCALE GENOMIC DNA]</scope>
    <source>
        <strain>Mu50 / ATCC 700699</strain>
    </source>
</reference>
<gene>
    <name evidence="1" type="primary">polC</name>
    <name type="ordered locus">SAV1264</name>
</gene>